<keyword id="KW-0687">Ribonucleoprotein</keyword>
<keyword id="KW-0689">Ribosomal protein</keyword>
<name>RL30_MYCSK</name>
<evidence type="ECO:0000255" key="1">
    <source>
        <dbReference type="HAMAP-Rule" id="MF_01371"/>
    </source>
</evidence>
<evidence type="ECO:0000305" key="2"/>
<proteinExistence type="inferred from homology"/>
<organism>
    <name type="scientific">Mycobacterium sp. (strain KMS)</name>
    <dbReference type="NCBI Taxonomy" id="189918"/>
    <lineage>
        <taxon>Bacteria</taxon>
        <taxon>Bacillati</taxon>
        <taxon>Actinomycetota</taxon>
        <taxon>Actinomycetes</taxon>
        <taxon>Mycobacteriales</taxon>
        <taxon>Mycobacteriaceae</taxon>
        <taxon>Mycobacterium</taxon>
    </lineage>
</organism>
<gene>
    <name evidence="1" type="primary">rpmD</name>
    <name type="ordered locus">Mkms_1050</name>
</gene>
<comment type="subunit">
    <text evidence="1">Part of the 50S ribosomal subunit.</text>
</comment>
<comment type="similarity">
    <text evidence="1">Belongs to the universal ribosomal protein uL30 family.</text>
</comment>
<accession>A1UBQ6</accession>
<feature type="chain" id="PRO_0000347121" description="Large ribosomal subunit protein uL30">
    <location>
        <begin position="1"/>
        <end position="61"/>
    </location>
</feature>
<protein>
    <recommendedName>
        <fullName evidence="1">Large ribosomal subunit protein uL30</fullName>
    </recommendedName>
    <alternativeName>
        <fullName evidence="2">50S ribosomal protein L30</fullName>
    </alternativeName>
</protein>
<sequence>MIMAELKIIQVRGTIGARWNQRESLRTLGLRKIRQSVVREDNAQTRGLIKTVHHLVVVEEV</sequence>
<reference key="1">
    <citation type="submission" date="2006-12" db="EMBL/GenBank/DDBJ databases">
        <title>Complete sequence of chromosome of Mycobacterium sp. KMS.</title>
        <authorList>
            <consortium name="US DOE Joint Genome Institute"/>
            <person name="Copeland A."/>
            <person name="Lucas S."/>
            <person name="Lapidus A."/>
            <person name="Barry K."/>
            <person name="Detter J.C."/>
            <person name="Glavina del Rio T."/>
            <person name="Hammon N."/>
            <person name="Israni S."/>
            <person name="Dalin E."/>
            <person name="Tice H."/>
            <person name="Pitluck S."/>
            <person name="Kiss H."/>
            <person name="Brettin T."/>
            <person name="Bruce D."/>
            <person name="Han C."/>
            <person name="Tapia R."/>
            <person name="Gilna P."/>
            <person name="Schmutz J."/>
            <person name="Larimer F."/>
            <person name="Land M."/>
            <person name="Hauser L."/>
            <person name="Kyrpides N."/>
            <person name="Mikhailova N."/>
            <person name="Miller C.D."/>
            <person name="Richardson P."/>
        </authorList>
    </citation>
    <scope>NUCLEOTIDE SEQUENCE [LARGE SCALE GENOMIC DNA]</scope>
    <source>
        <strain>KMS</strain>
    </source>
</reference>
<dbReference type="EMBL" id="CP000518">
    <property type="protein sequence ID" value="ABL90264.1"/>
    <property type="molecule type" value="Genomic_DNA"/>
</dbReference>
<dbReference type="SMR" id="A1UBQ6"/>
<dbReference type="STRING" id="189918.Mkms_1050"/>
<dbReference type="KEGG" id="mkm:Mkms_1050"/>
<dbReference type="HOGENOM" id="CLU_131047_2_0_11"/>
<dbReference type="GO" id="GO:0022625">
    <property type="term" value="C:cytosolic large ribosomal subunit"/>
    <property type="evidence" value="ECO:0007669"/>
    <property type="project" value="TreeGrafter"/>
</dbReference>
<dbReference type="GO" id="GO:0003735">
    <property type="term" value="F:structural constituent of ribosome"/>
    <property type="evidence" value="ECO:0007669"/>
    <property type="project" value="InterPro"/>
</dbReference>
<dbReference type="GO" id="GO:0006412">
    <property type="term" value="P:translation"/>
    <property type="evidence" value="ECO:0007669"/>
    <property type="project" value="UniProtKB-UniRule"/>
</dbReference>
<dbReference type="CDD" id="cd01658">
    <property type="entry name" value="Ribosomal_L30"/>
    <property type="match status" value="1"/>
</dbReference>
<dbReference type="FunFam" id="3.30.1390.20:FF:000001">
    <property type="entry name" value="50S ribosomal protein L30"/>
    <property type="match status" value="1"/>
</dbReference>
<dbReference type="Gene3D" id="3.30.1390.20">
    <property type="entry name" value="Ribosomal protein L30, ferredoxin-like fold domain"/>
    <property type="match status" value="1"/>
</dbReference>
<dbReference type="HAMAP" id="MF_01371_B">
    <property type="entry name" value="Ribosomal_uL30_B"/>
    <property type="match status" value="1"/>
</dbReference>
<dbReference type="InterPro" id="IPR036919">
    <property type="entry name" value="Ribo_uL30_ferredoxin-like_sf"/>
</dbReference>
<dbReference type="InterPro" id="IPR005996">
    <property type="entry name" value="Ribosomal_uL30_bac-type"/>
</dbReference>
<dbReference type="InterPro" id="IPR018038">
    <property type="entry name" value="Ribosomal_uL30_CS"/>
</dbReference>
<dbReference type="InterPro" id="IPR016082">
    <property type="entry name" value="Ribosomal_uL30_ferredoxin-like"/>
</dbReference>
<dbReference type="NCBIfam" id="TIGR01308">
    <property type="entry name" value="rpmD_bact"/>
    <property type="match status" value="1"/>
</dbReference>
<dbReference type="PANTHER" id="PTHR15892:SF2">
    <property type="entry name" value="LARGE RIBOSOMAL SUBUNIT PROTEIN UL30M"/>
    <property type="match status" value="1"/>
</dbReference>
<dbReference type="PANTHER" id="PTHR15892">
    <property type="entry name" value="MITOCHONDRIAL RIBOSOMAL PROTEIN L30"/>
    <property type="match status" value="1"/>
</dbReference>
<dbReference type="Pfam" id="PF00327">
    <property type="entry name" value="Ribosomal_L30"/>
    <property type="match status" value="1"/>
</dbReference>
<dbReference type="PIRSF" id="PIRSF002211">
    <property type="entry name" value="Ribosomal_L30_bac-type"/>
    <property type="match status" value="1"/>
</dbReference>
<dbReference type="SUPFAM" id="SSF55129">
    <property type="entry name" value="Ribosomal protein L30p/L7e"/>
    <property type="match status" value="1"/>
</dbReference>
<dbReference type="PROSITE" id="PS00634">
    <property type="entry name" value="RIBOSOMAL_L30"/>
    <property type="match status" value="1"/>
</dbReference>